<gene>
    <name type="ORF">NFIA_019760</name>
</gene>
<dbReference type="EC" id="3.1.1.-"/>
<dbReference type="EMBL" id="DS027688">
    <property type="protein sequence ID" value="EAW23271.1"/>
    <property type="molecule type" value="Genomic_DNA"/>
</dbReference>
<dbReference type="RefSeq" id="XP_001265168.1">
    <property type="nucleotide sequence ID" value="XM_001265167.1"/>
</dbReference>
<dbReference type="STRING" id="331117.A1D4C8"/>
<dbReference type="EnsemblFungi" id="EAW23271">
    <property type="protein sequence ID" value="EAW23271"/>
    <property type="gene ID" value="NFIA_019760"/>
</dbReference>
<dbReference type="GeneID" id="4591597"/>
<dbReference type="KEGG" id="nfi:NFIA_019760"/>
<dbReference type="VEuPathDB" id="FungiDB:NFIA_019760"/>
<dbReference type="eggNOG" id="KOG2214">
    <property type="taxonomic scope" value="Eukaryota"/>
</dbReference>
<dbReference type="HOGENOM" id="CLU_009031_2_2_1"/>
<dbReference type="OMA" id="CSWFTRG"/>
<dbReference type="OrthoDB" id="15478at2759"/>
<dbReference type="Proteomes" id="UP000006702">
    <property type="component" value="Unassembled WGS sequence"/>
</dbReference>
<dbReference type="GO" id="GO:0005811">
    <property type="term" value="C:lipid droplet"/>
    <property type="evidence" value="ECO:0007669"/>
    <property type="project" value="EnsemblFungi"/>
</dbReference>
<dbReference type="GO" id="GO:0016020">
    <property type="term" value="C:membrane"/>
    <property type="evidence" value="ECO:0007669"/>
    <property type="project" value="UniProtKB-SubCell"/>
</dbReference>
<dbReference type="GO" id="GO:0004806">
    <property type="term" value="F:triacylglycerol lipase activity"/>
    <property type="evidence" value="ECO:0007669"/>
    <property type="project" value="EnsemblFungi"/>
</dbReference>
<dbReference type="GO" id="GO:1990748">
    <property type="term" value="P:cellular detoxification"/>
    <property type="evidence" value="ECO:0007669"/>
    <property type="project" value="EnsemblFungi"/>
</dbReference>
<dbReference type="GO" id="GO:0016042">
    <property type="term" value="P:lipid catabolic process"/>
    <property type="evidence" value="ECO:0007669"/>
    <property type="project" value="UniProtKB-KW"/>
</dbReference>
<dbReference type="GO" id="GO:0006642">
    <property type="term" value="P:triglyceride mobilization"/>
    <property type="evidence" value="ECO:0007669"/>
    <property type="project" value="EnsemblFungi"/>
</dbReference>
<dbReference type="CDD" id="cd07232">
    <property type="entry name" value="Pat_PLPL"/>
    <property type="match status" value="1"/>
</dbReference>
<dbReference type="Gene3D" id="3.40.1090.10">
    <property type="entry name" value="Cytosolic phospholipase A2 catalytic domain"/>
    <property type="match status" value="2"/>
</dbReference>
<dbReference type="InterPro" id="IPR016035">
    <property type="entry name" value="Acyl_Trfase/lysoPLipase"/>
</dbReference>
<dbReference type="InterPro" id="IPR050301">
    <property type="entry name" value="NTE"/>
</dbReference>
<dbReference type="InterPro" id="IPR002641">
    <property type="entry name" value="PNPLA_dom"/>
</dbReference>
<dbReference type="InterPro" id="IPR021771">
    <property type="entry name" value="Triacylglycerol_lipase_N"/>
</dbReference>
<dbReference type="PANTHER" id="PTHR14226">
    <property type="entry name" value="NEUROPATHY TARGET ESTERASE/SWISS CHEESE D.MELANOGASTER"/>
    <property type="match status" value="1"/>
</dbReference>
<dbReference type="PANTHER" id="PTHR14226:SF66">
    <property type="entry name" value="TRIACYLGLYCEROL LIPASE PTL2"/>
    <property type="match status" value="1"/>
</dbReference>
<dbReference type="Pfam" id="PF11815">
    <property type="entry name" value="DUF3336"/>
    <property type="match status" value="1"/>
</dbReference>
<dbReference type="Pfam" id="PF01734">
    <property type="entry name" value="Patatin"/>
    <property type="match status" value="1"/>
</dbReference>
<dbReference type="SUPFAM" id="SSF52151">
    <property type="entry name" value="FabD/lysophospholipase-like"/>
    <property type="match status" value="1"/>
</dbReference>
<dbReference type="PROSITE" id="PS51635">
    <property type="entry name" value="PNPLA"/>
    <property type="match status" value="1"/>
</dbReference>
<sequence>MTSDEKSATRDIYDPNTLPDYDREFIDPDDLRQFEKALNAPEAAPLVALNDWRPVNQRVRKSRRTKPRRSKDETREGVLYTVLKWPFLFTVFAWITVLGFAYTLTRLYIFLYEQFVTWRGKRERLRKELSMQTNYQDWLKAAQALDTYLGNLKWKETDEYAYYDHLTINKVVAQLKQTRKAAETEMQNGRSGLSDPPAVEELCFLLEACVKNNFAGVENPRLYSETYSGTKDLVQEYIDEVHSCIRLVLDSKQISNEDKYQFFKHLDTNFGRTALCLSGGATFAYYHFGVIRALLDNDVLPEIITGTSGGALVAALVATRTDEELKQLLVPALAHRIRACHEGFTTWVRRWWRTGARFDTLDWARQCSWFCRGSTTFREAYERTGRILNVSCVPSDPHSPTILANYLTSPDCVIWSAVLASAAVPGILNPVVLMTKKRDGTLAPYSFGHKWKDGSLRTDIPIKALNLHFNVNFTIVSQVNPHINLFFFNSRGSVGRPVTHRKGRGWRGGFLGSAIEQYIKLDMNKWLRVLRHLELLPRPLGQDWSEIWLQKFSGTITIWPKSIPSDFYHILSDPSPERLARMLHVGKQSAFPKIQFIKNRLKIENAIMQGLQQCSSGGGRVMSPILSRRRQDRAEEHADRMVERLDQSFPERQSDYKDESHYTEVSDSLSATSSRPHTPDARRSSMFEEMRRQSAVFFDDSDMYADEDAVTT</sequence>
<evidence type="ECO:0000250" key="1"/>
<evidence type="ECO:0000255" key="2"/>
<evidence type="ECO:0000255" key="3">
    <source>
        <dbReference type="PROSITE-ProRule" id="PRU01161"/>
    </source>
</evidence>
<evidence type="ECO:0000256" key="4">
    <source>
        <dbReference type="SAM" id="MobiDB-lite"/>
    </source>
</evidence>
<evidence type="ECO:0000305" key="5"/>
<reference key="1">
    <citation type="journal article" date="2008" name="PLoS Genet.">
        <title>Genomic islands in the pathogenic filamentous fungus Aspergillus fumigatus.</title>
        <authorList>
            <person name="Fedorova N.D."/>
            <person name="Khaldi N."/>
            <person name="Joardar V.S."/>
            <person name="Maiti R."/>
            <person name="Amedeo P."/>
            <person name="Anderson M.J."/>
            <person name="Crabtree J."/>
            <person name="Silva J.C."/>
            <person name="Badger J.H."/>
            <person name="Albarraq A."/>
            <person name="Angiuoli S."/>
            <person name="Bussey H."/>
            <person name="Bowyer P."/>
            <person name="Cotty P.J."/>
            <person name="Dyer P.S."/>
            <person name="Egan A."/>
            <person name="Galens K."/>
            <person name="Fraser-Liggett C.M."/>
            <person name="Haas B.J."/>
            <person name="Inman J.M."/>
            <person name="Kent R."/>
            <person name="Lemieux S."/>
            <person name="Malavazi I."/>
            <person name="Orvis J."/>
            <person name="Roemer T."/>
            <person name="Ronning C.M."/>
            <person name="Sundaram J.P."/>
            <person name="Sutton G."/>
            <person name="Turner G."/>
            <person name="Venter J.C."/>
            <person name="White O.R."/>
            <person name="Whitty B.R."/>
            <person name="Youngman P."/>
            <person name="Wolfe K.H."/>
            <person name="Goldman G.H."/>
            <person name="Wortman J.R."/>
            <person name="Jiang B."/>
            <person name="Denning D.W."/>
            <person name="Nierman W.C."/>
        </authorList>
    </citation>
    <scope>NUCLEOTIDE SEQUENCE [LARGE SCALE GENOMIC DNA]</scope>
    <source>
        <strain>ATCC 1020 / DSM 3700 / CBS 544.65 / FGSC A1164 / JCM 1740 / NRRL 181 / WB 181</strain>
    </source>
</reference>
<protein>
    <recommendedName>
        <fullName>Patatin-like phospholipase domain-containing protein NFIA_019760</fullName>
        <ecNumber>3.1.1.-</ecNumber>
    </recommendedName>
</protein>
<organism>
    <name type="scientific">Neosartorya fischeri (strain ATCC 1020 / DSM 3700 / CBS 544.65 / FGSC A1164 / JCM 1740 / NRRL 181 / WB 181)</name>
    <name type="common">Aspergillus fischerianus</name>
    <dbReference type="NCBI Taxonomy" id="331117"/>
    <lineage>
        <taxon>Eukaryota</taxon>
        <taxon>Fungi</taxon>
        <taxon>Dikarya</taxon>
        <taxon>Ascomycota</taxon>
        <taxon>Pezizomycotina</taxon>
        <taxon>Eurotiomycetes</taxon>
        <taxon>Eurotiomycetidae</taxon>
        <taxon>Eurotiales</taxon>
        <taxon>Aspergillaceae</taxon>
        <taxon>Aspergillus</taxon>
        <taxon>Aspergillus subgen. Fumigati</taxon>
    </lineage>
</organism>
<keyword id="KW-0378">Hydrolase</keyword>
<keyword id="KW-0442">Lipid degradation</keyword>
<keyword id="KW-0443">Lipid metabolism</keyword>
<keyword id="KW-0472">Membrane</keyword>
<keyword id="KW-1185">Reference proteome</keyword>
<keyword id="KW-0812">Transmembrane</keyword>
<keyword id="KW-1133">Transmembrane helix</keyword>
<feature type="chain" id="PRO_0000295562" description="Patatin-like phospholipase domain-containing protein NFIA_019760">
    <location>
        <begin position="1"/>
        <end position="712"/>
    </location>
</feature>
<feature type="transmembrane region" description="Helical" evidence="2">
    <location>
        <begin position="85"/>
        <end position="105"/>
    </location>
</feature>
<feature type="domain" description="PNPLA" evidence="3">
    <location>
        <begin position="275"/>
        <end position="466"/>
    </location>
</feature>
<feature type="region of interest" description="Disordered" evidence="4">
    <location>
        <begin position="1"/>
        <end position="21"/>
    </location>
</feature>
<feature type="region of interest" description="Disordered" evidence="4">
    <location>
        <begin position="628"/>
        <end position="687"/>
    </location>
</feature>
<feature type="short sequence motif" description="GXSXG" evidence="3">
    <location>
        <begin position="306"/>
        <end position="310"/>
    </location>
</feature>
<feature type="compositionally biased region" description="Basic and acidic residues" evidence="4">
    <location>
        <begin position="1"/>
        <end position="13"/>
    </location>
</feature>
<feature type="compositionally biased region" description="Basic and acidic residues" evidence="4">
    <location>
        <begin position="632"/>
        <end position="646"/>
    </location>
</feature>
<feature type="compositionally biased region" description="Basic and acidic residues" evidence="4">
    <location>
        <begin position="652"/>
        <end position="664"/>
    </location>
</feature>
<feature type="compositionally biased region" description="Polar residues" evidence="4">
    <location>
        <begin position="665"/>
        <end position="676"/>
    </location>
</feature>
<feature type="compositionally biased region" description="Basic and acidic residues" evidence="4">
    <location>
        <begin position="677"/>
        <end position="687"/>
    </location>
</feature>
<feature type="active site" description="Nucleophile" evidence="3">
    <location>
        <position position="308"/>
    </location>
</feature>
<feature type="active site" description="Proton acceptor" evidence="3">
    <location>
        <position position="453"/>
    </location>
</feature>
<comment type="function">
    <text evidence="1">Probable lipid hydrolase.</text>
</comment>
<comment type="subcellular location">
    <subcellularLocation>
        <location evidence="5">Membrane</location>
        <topology evidence="5">Single-pass membrane protein</topology>
    </subcellularLocation>
</comment>
<comment type="similarity">
    <text evidence="5">Belongs to the PLPL family.</text>
</comment>
<proteinExistence type="inferred from homology"/>
<name>PLPL_NEOFI</name>
<accession>A1D4C8</accession>